<sequence>MTHTNGFDALHAHAQRLRGAAIPALLAAEPQRPTQYARQVGPLYFNFARQKYDRAALDALFAIARERDLAGAFQRLFRGEQVNVTEQRAALHTALRGDLTDAPVASDAYATAAEVRQRVGALIQQLEGTDVTDIVSVGIGGSDLGPRLVADALRAPSGARFRVHFVSNVDGAAMQRTLATLDPARTAGILISKTFGTQETLLNGSILHAWLGGSERLYAVSANPERAAKAFDIAPGRVLPMWDWVGGRYSLWSAVGFPIALAIGFERFEQLLDGAAQFDAHVLNTPLEENVAVLHGLTAVWNRNLLGSATHAVMTYDQRLALLPAYLQQLVMESLGKRVKLDGAAVDSDTVAVWWGGAGTDVQHSFFQALHQGTSVVPADFIGTVHNDDPYAENHVALMANVLAQTEALANGQDSSDPHRSYPGGRPSTVILLDALTPQALGALISMYEHSVYVQSVMWGINAFDQFGVELGKQLASQLLPALKGEAADVADPVTRELLAKLRG</sequence>
<gene>
    <name evidence="1" type="primary">pgi</name>
    <name type="ordered locus">xcc-b100_2492</name>
</gene>
<accession>B0RTT8</accession>
<name>G6PI_XANCB</name>
<dbReference type="EC" id="5.3.1.9" evidence="1"/>
<dbReference type="EMBL" id="AM920689">
    <property type="protein sequence ID" value="CAP51852.1"/>
    <property type="molecule type" value="Genomic_DNA"/>
</dbReference>
<dbReference type="SMR" id="B0RTT8"/>
<dbReference type="KEGG" id="xca:xcc-b100_2492"/>
<dbReference type="HOGENOM" id="CLU_017947_3_1_6"/>
<dbReference type="UniPathway" id="UPA00109">
    <property type="reaction ID" value="UER00181"/>
</dbReference>
<dbReference type="UniPathway" id="UPA00138"/>
<dbReference type="Proteomes" id="UP000001188">
    <property type="component" value="Chromosome"/>
</dbReference>
<dbReference type="GO" id="GO:0005829">
    <property type="term" value="C:cytosol"/>
    <property type="evidence" value="ECO:0007669"/>
    <property type="project" value="TreeGrafter"/>
</dbReference>
<dbReference type="GO" id="GO:0097367">
    <property type="term" value="F:carbohydrate derivative binding"/>
    <property type="evidence" value="ECO:0007669"/>
    <property type="project" value="InterPro"/>
</dbReference>
<dbReference type="GO" id="GO:0004347">
    <property type="term" value="F:glucose-6-phosphate isomerase activity"/>
    <property type="evidence" value="ECO:0007669"/>
    <property type="project" value="UniProtKB-UniRule"/>
</dbReference>
<dbReference type="GO" id="GO:0048029">
    <property type="term" value="F:monosaccharide binding"/>
    <property type="evidence" value="ECO:0007669"/>
    <property type="project" value="TreeGrafter"/>
</dbReference>
<dbReference type="GO" id="GO:0006094">
    <property type="term" value="P:gluconeogenesis"/>
    <property type="evidence" value="ECO:0007669"/>
    <property type="project" value="UniProtKB-UniRule"/>
</dbReference>
<dbReference type="GO" id="GO:0051156">
    <property type="term" value="P:glucose 6-phosphate metabolic process"/>
    <property type="evidence" value="ECO:0007669"/>
    <property type="project" value="TreeGrafter"/>
</dbReference>
<dbReference type="GO" id="GO:0006096">
    <property type="term" value="P:glycolytic process"/>
    <property type="evidence" value="ECO:0007669"/>
    <property type="project" value="UniProtKB-UniRule"/>
</dbReference>
<dbReference type="CDD" id="cd05015">
    <property type="entry name" value="SIS_PGI_1"/>
    <property type="match status" value="1"/>
</dbReference>
<dbReference type="CDD" id="cd05016">
    <property type="entry name" value="SIS_PGI_2"/>
    <property type="match status" value="1"/>
</dbReference>
<dbReference type="Gene3D" id="1.10.1390.10">
    <property type="match status" value="1"/>
</dbReference>
<dbReference type="Gene3D" id="3.40.50.10490">
    <property type="entry name" value="Glucose-6-phosphate isomerase like protein, domain 1"/>
    <property type="match status" value="2"/>
</dbReference>
<dbReference type="HAMAP" id="MF_00473">
    <property type="entry name" value="G6P_isomerase"/>
    <property type="match status" value="1"/>
</dbReference>
<dbReference type="InterPro" id="IPR001672">
    <property type="entry name" value="G6P_Isomerase"/>
</dbReference>
<dbReference type="InterPro" id="IPR023096">
    <property type="entry name" value="G6P_Isomerase_C"/>
</dbReference>
<dbReference type="InterPro" id="IPR018189">
    <property type="entry name" value="Phosphoglucose_isomerase_CS"/>
</dbReference>
<dbReference type="InterPro" id="IPR046348">
    <property type="entry name" value="SIS_dom_sf"/>
</dbReference>
<dbReference type="InterPro" id="IPR035476">
    <property type="entry name" value="SIS_PGI_1"/>
</dbReference>
<dbReference type="InterPro" id="IPR035482">
    <property type="entry name" value="SIS_PGI_2"/>
</dbReference>
<dbReference type="NCBIfam" id="NF001211">
    <property type="entry name" value="PRK00179.1"/>
    <property type="match status" value="1"/>
</dbReference>
<dbReference type="PANTHER" id="PTHR11469">
    <property type="entry name" value="GLUCOSE-6-PHOSPHATE ISOMERASE"/>
    <property type="match status" value="1"/>
</dbReference>
<dbReference type="PANTHER" id="PTHR11469:SF1">
    <property type="entry name" value="GLUCOSE-6-PHOSPHATE ISOMERASE"/>
    <property type="match status" value="1"/>
</dbReference>
<dbReference type="Pfam" id="PF00342">
    <property type="entry name" value="PGI"/>
    <property type="match status" value="1"/>
</dbReference>
<dbReference type="PRINTS" id="PR00662">
    <property type="entry name" value="G6PISOMERASE"/>
</dbReference>
<dbReference type="SUPFAM" id="SSF53697">
    <property type="entry name" value="SIS domain"/>
    <property type="match status" value="1"/>
</dbReference>
<dbReference type="PROSITE" id="PS00765">
    <property type="entry name" value="P_GLUCOSE_ISOMERASE_1"/>
    <property type="match status" value="1"/>
</dbReference>
<dbReference type="PROSITE" id="PS00174">
    <property type="entry name" value="P_GLUCOSE_ISOMERASE_2"/>
    <property type="match status" value="1"/>
</dbReference>
<dbReference type="PROSITE" id="PS51463">
    <property type="entry name" value="P_GLUCOSE_ISOMERASE_3"/>
    <property type="match status" value="1"/>
</dbReference>
<protein>
    <recommendedName>
        <fullName evidence="1">Glucose-6-phosphate isomerase</fullName>
        <shortName evidence="1">GPI</shortName>
        <ecNumber evidence="1">5.3.1.9</ecNumber>
    </recommendedName>
    <alternativeName>
        <fullName evidence="1">Phosphoglucose isomerase</fullName>
        <shortName evidence="1">PGI</shortName>
    </alternativeName>
    <alternativeName>
        <fullName evidence="1">Phosphohexose isomerase</fullName>
        <shortName evidence="1">PHI</shortName>
    </alternativeName>
</protein>
<keyword id="KW-0963">Cytoplasm</keyword>
<keyword id="KW-0312">Gluconeogenesis</keyword>
<keyword id="KW-0324">Glycolysis</keyword>
<keyword id="KW-0413">Isomerase</keyword>
<organism>
    <name type="scientific">Xanthomonas campestris pv. campestris (strain B100)</name>
    <dbReference type="NCBI Taxonomy" id="509169"/>
    <lineage>
        <taxon>Bacteria</taxon>
        <taxon>Pseudomonadati</taxon>
        <taxon>Pseudomonadota</taxon>
        <taxon>Gammaproteobacteria</taxon>
        <taxon>Lysobacterales</taxon>
        <taxon>Lysobacteraceae</taxon>
        <taxon>Xanthomonas</taxon>
    </lineage>
</organism>
<comment type="function">
    <text evidence="1">Catalyzes the reversible isomerization of glucose-6-phosphate to fructose-6-phosphate.</text>
</comment>
<comment type="catalytic activity">
    <reaction evidence="1">
        <text>alpha-D-glucose 6-phosphate = beta-D-fructose 6-phosphate</text>
        <dbReference type="Rhea" id="RHEA:11816"/>
        <dbReference type="ChEBI" id="CHEBI:57634"/>
        <dbReference type="ChEBI" id="CHEBI:58225"/>
        <dbReference type="EC" id="5.3.1.9"/>
    </reaction>
</comment>
<comment type="pathway">
    <text evidence="1">Carbohydrate biosynthesis; gluconeogenesis.</text>
</comment>
<comment type="pathway">
    <text evidence="1">Carbohydrate degradation; glycolysis; D-glyceraldehyde 3-phosphate and glycerone phosphate from D-glucose: step 2/4.</text>
</comment>
<comment type="subcellular location">
    <subcellularLocation>
        <location evidence="1">Cytoplasm</location>
    </subcellularLocation>
</comment>
<comment type="similarity">
    <text evidence="1">Belongs to the GPI family.</text>
</comment>
<proteinExistence type="inferred from homology"/>
<evidence type="ECO:0000255" key="1">
    <source>
        <dbReference type="HAMAP-Rule" id="MF_00473"/>
    </source>
</evidence>
<feature type="chain" id="PRO_1000125774" description="Glucose-6-phosphate isomerase">
    <location>
        <begin position="1"/>
        <end position="504"/>
    </location>
</feature>
<feature type="active site" description="Proton donor" evidence="1">
    <location>
        <position position="333"/>
    </location>
</feature>
<feature type="active site" evidence="1">
    <location>
        <position position="364"/>
    </location>
</feature>
<feature type="active site" evidence="1">
    <location>
        <position position="473"/>
    </location>
</feature>
<reference key="1">
    <citation type="journal article" date="2008" name="J. Biotechnol.">
        <title>The genome of Xanthomonas campestris pv. campestris B100 and its use for the reconstruction of metabolic pathways involved in xanthan biosynthesis.</title>
        <authorList>
            <person name="Vorhoelter F.-J."/>
            <person name="Schneiker S."/>
            <person name="Goesmann A."/>
            <person name="Krause L."/>
            <person name="Bekel T."/>
            <person name="Kaiser O."/>
            <person name="Linke B."/>
            <person name="Patschkowski T."/>
            <person name="Rueckert C."/>
            <person name="Schmid J."/>
            <person name="Sidhu V.K."/>
            <person name="Sieber V."/>
            <person name="Tauch A."/>
            <person name="Watt S.A."/>
            <person name="Weisshaar B."/>
            <person name="Becker A."/>
            <person name="Niehaus K."/>
            <person name="Puehler A."/>
        </authorList>
    </citation>
    <scope>NUCLEOTIDE SEQUENCE [LARGE SCALE GENOMIC DNA]</scope>
    <source>
        <strain>B100</strain>
    </source>
</reference>